<reference key="1">
    <citation type="submission" date="2007-02" db="EMBL/GenBank/DDBJ databases">
        <title>Complete sequence of chromosome 1 of Rhodobacter sphaeroides ATCC 17029.</title>
        <authorList>
            <person name="Copeland A."/>
            <person name="Lucas S."/>
            <person name="Lapidus A."/>
            <person name="Barry K."/>
            <person name="Detter J.C."/>
            <person name="Glavina del Rio T."/>
            <person name="Hammon N."/>
            <person name="Israni S."/>
            <person name="Dalin E."/>
            <person name="Tice H."/>
            <person name="Pitluck S."/>
            <person name="Kiss H."/>
            <person name="Brettin T."/>
            <person name="Bruce D."/>
            <person name="Han C."/>
            <person name="Tapia R."/>
            <person name="Gilna P."/>
            <person name="Schmutz J."/>
            <person name="Larimer F."/>
            <person name="Land M."/>
            <person name="Hauser L."/>
            <person name="Kyrpides N."/>
            <person name="Mikhailova N."/>
            <person name="Richardson P."/>
            <person name="Mackenzie C."/>
            <person name="Choudhary M."/>
            <person name="Donohue T.J."/>
            <person name="Kaplan S."/>
        </authorList>
    </citation>
    <scope>NUCLEOTIDE SEQUENCE [LARGE SCALE GENOMIC DNA]</scope>
    <source>
        <strain>ATCC 17029 / ATH 2.4.9</strain>
    </source>
</reference>
<accession>A3PGM1</accession>
<name>RL14_CERS1</name>
<feature type="chain" id="PRO_1000055687" description="Large ribosomal subunit protein uL14">
    <location>
        <begin position="1"/>
        <end position="122"/>
    </location>
</feature>
<gene>
    <name evidence="1" type="primary">rplN</name>
    <name type="ordered locus">Rsph17029_0371</name>
</gene>
<organism>
    <name type="scientific">Cereibacter sphaeroides (strain ATCC 17029 / ATH 2.4.9)</name>
    <name type="common">Rhodobacter sphaeroides</name>
    <dbReference type="NCBI Taxonomy" id="349101"/>
    <lineage>
        <taxon>Bacteria</taxon>
        <taxon>Pseudomonadati</taxon>
        <taxon>Pseudomonadota</taxon>
        <taxon>Alphaproteobacteria</taxon>
        <taxon>Rhodobacterales</taxon>
        <taxon>Paracoccaceae</taxon>
        <taxon>Cereibacter</taxon>
    </lineage>
</organism>
<protein>
    <recommendedName>
        <fullName evidence="1">Large ribosomal subunit protein uL14</fullName>
    </recommendedName>
    <alternativeName>
        <fullName evidence="2">50S ribosomal protein L14</fullName>
    </alternativeName>
</protein>
<proteinExistence type="inferred from homology"/>
<dbReference type="EMBL" id="CP000577">
    <property type="protein sequence ID" value="ABN75487.1"/>
    <property type="molecule type" value="Genomic_DNA"/>
</dbReference>
<dbReference type="RefSeq" id="WP_002722508.1">
    <property type="nucleotide sequence ID" value="NC_009049.1"/>
</dbReference>
<dbReference type="SMR" id="A3PGM1"/>
<dbReference type="GeneID" id="67445510"/>
<dbReference type="KEGG" id="rsh:Rsph17029_0371"/>
<dbReference type="HOGENOM" id="CLU_095071_2_1_5"/>
<dbReference type="GO" id="GO:0022625">
    <property type="term" value="C:cytosolic large ribosomal subunit"/>
    <property type="evidence" value="ECO:0007669"/>
    <property type="project" value="TreeGrafter"/>
</dbReference>
<dbReference type="GO" id="GO:0070180">
    <property type="term" value="F:large ribosomal subunit rRNA binding"/>
    <property type="evidence" value="ECO:0007669"/>
    <property type="project" value="TreeGrafter"/>
</dbReference>
<dbReference type="GO" id="GO:0003735">
    <property type="term" value="F:structural constituent of ribosome"/>
    <property type="evidence" value="ECO:0007669"/>
    <property type="project" value="InterPro"/>
</dbReference>
<dbReference type="GO" id="GO:0006412">
    <property type="term" value="P:translation"/>
    <property type="evidence" value="ECO:0007669"/>
    <property type="project" value="UniProtKB-UniRule"/>
</dbReference>
<dbReference type="CDD" id="cd00337">
    <property type="entry name" value="Ribosomal_uL14"/>
    <property type="match status" value="1"/>
</dbReference>
<dbReference type="FunFam" id="2.40.150.20:FF:000001">
    <property type="entry name" value="50S ribosomal protein L14"/>
    <property type="match status" value="1"/>
</dbReference>
<dbReference type="Gene3D" id="2.40.150.20">
    <property type="entry name" value="Ribosomal protein L14"/>
    <property type="match status" value="1"/>
</dbReference>
<dbReference type="HAMAP" id="MF_01367">
    <property type="entry name" value="Ribosomal_uL14"/>
    <property type="match status" value="1"/>
</dbReference>
<dbReference type="InterPro" id="IPR000218">
    <property type="entry name" value="Ribosomal_uL14"/>
</dbReference>
<dbReference type="InterPro" id="IPR005745">
    <property type="entry name" value="Ribosomal_uL14_bac-type"/>
</dbReference>
<dbReference type="InterPro" id="IPR019972">
    <property type="entry name" value="Ribosomal_uL14_CS"/>
</dbReference>
<dbReference type="InterPro" id="IPR036853">
    <property type="entry name" value="Ribosomal_uL14_sf"/>
</dbReference>
<dbReference type="NCBIfam" id="TIGR01067">
    <property type="entry name" value="rplN_bact"/>
    <property type="match status" value="1"/>
</dbReference>
<dbReference type="PANTHER" id="PTHR11761">
    <property type="entry name" value="50S/60S RIBOSOMAL PROTEIN L14/L23"/>
    <property type="match status" value="1"/>
</dbReference>
<dbReference type="PANTHER" id="PTHR11761:SF3">
    <property type="entry name" value="LARGE RIBOSOMAL SUBUNIT PROTEIN UL14M"/>
    <property type="match status" value="1"/>
</dbReference>
<dbReference type="Pfam" id="PF00238">
    <property type="entry name" value="Ribosomal_L14"/>
    <property type="match status" value="1"/>
</dbReference>
<dbReference type="SMART" id="SM01374">
    <property type="entry name" value="Ribosomal_L14"/>
    <property type="match status" value="1"/>
</dbReference>
<dbReference type="SUPFAM" id="SSF50193">
    <property type="entry name" value="Ribosomal protein L14"/>
    <property type="match status" value="1"/>
</dbReference>
<dbReference type="PROSITE" id="PS00049">
    <property type="entry name" value="RIBOSOMAL_L14"/>
    <property type="match status" value="1"/>
</dbReference>
<evidence type="ECO:0000255" key="1">
    <source>
        <dbReference type="HAMAP-Rule" id="MF_01367"/>
    </source>
</evidence>
<evidence type="ECO:0000305" key="2"/>
<comment type="function">
    <text evidence="1">Binds to 23S rRNA. Forms part of two intersubunit bridges in the 70S ribosome.</text>
</comment>
<comment type="subunit">
    <text evidence="1">Part of the 50S ribosomal subunit. Forms a cluster with proteins L3 and L19. In the 70S ribosome, L14 and L19 interact and together make contacts with the 16S rRNA in bridges B5 and B8.</text>
</comment>
<comment type="similarity">
    <text evidence="1">Belongs to the universal ribosomal protein uL14 family.</text>
</comment>
<keyword id="KW-0687">Ribonucleoprotein</keyword>
<keyword id="KW-0689">Ribosomal protein</keyword>
<keyword id="KW-0694">RNA-binding</keyword>
<keyword id="KW-0699">rRNA-binding</keyword>
<sequence length="122" mass="13493">MIQMQTNLDVADNSGARRVQCIKVLGGSHRRYASVGDIIVVSVKEAIPRGRVKKGDVRKAVVVRTAKEVRREDGTTIRFDRNAAVILNNQGEPVGTRIFGPVVRELRAKNFMKIISLAPEVL</sequence>